<gene>
    <name evidence="1" type="primary">topB</name>
    <name type="ordered locus">VC_2043</name>
</gene>
<name>TOP3_VIBCH</name>
<organism>
    <name type="scientific">Vibrio cholerae serotype O1 (strain ATCC 39315 / El Tor Inaba N16961)</name>
    <dbReference type="NCBI Taxonomy" id="243277"/>
    <lineage>
        <taxon>Bacteria</taxon>
        <taxon>Pseudomonadati</taxon>
        <taxon>Pseudomonadota</taxon>
        <taxon>Gammaproteobacteria</taxon>
        <taxon>Vibrionales</taxon>
        <taxon>Vibrionaceae</taxon>
        <taxon>Vibrio</taxon>
    </lineage>
</organism>
<protein>
    <recommendedName>
        <fullName evidence="1">DNA topoisomerase 3</fullName>
        <ecNumber evidence="1">5.6.2.1</ecNumber>
    </recommendedName>
    <alternativeName>
        <fullName evidence="1">DNA topoisomerase III</fullName>
    </alternativeName>
</protein>
<evidence type="ECO:0000255" key="1">
    <source>
        <dbReference type="HAMAP-Rule" id="MF_00953"/>
    </source>
</evidence>
<evidence type="ECO:0000255" key="2">
    <source>
        <dbReference type="PROSITE-ProRule" id="PRU01383"/>
    </source>
</evidence>
<proteinExistence type="inferred from homology"/>
<keyword id="KW-0238">DNA-binding</keyword>
<keyword id="KW-0413">Isomerase</keyword>
<keyword id="KW-0460">Magnesium</keyword>
<keyword id="KW-0479">Metal-binding</keyword>
<keyword id="KW-1185">Reference proteome</keyword>
<keyword id="KW-0799">Topoisomerase</keyword>
<feature type="chain" id="PRO_0000145189" description="DNA topoisomerase 3">
    <location>
        <begin position="1"/>
        <end position="647"/>
    </location>
</feature>
<feature type="domain" description="Toprim" evidence="1">
    <location>
        <begin position="2"/>
        <end position="135"/>
    </location>
</feature>
<feature type="domain" description="Topo IA-type catalytic" evidence="2">
    <location>
        <begin position="156"/>
        <end position="608"/>
    </location>
</feature>
<feature type="region of interest" description="Interaction with DNA" evidence="1">
    <location>
        <begin position="195"/>
        <end position="200"/>
    </location>
</feature>
<feature type="active site" description="O-(5'-phospho-DNA)-tyrosine intermediate" evidence="2">
    <location>
        <position position="332"/>
    </location>
</feature>
<feature type="binding site" evidence="1">
    <location>
        <position position="8"/>
    </location>
    <ligand>
        <name>Mg(2+)</name>
        <dbReference type="ChEBI" id="CHEBI:18420"/>
        <label>1</label>
        <note>catalytic</note>
    </ligand>
</feature>
<feature type="binding site" evidence="1">
    <location>
        <position position="104"/>
    </location>
    <ligand>
        <name>Mg(2+)</name>
        <dbReference type="ChEBI" id="CHEBI:18420"/>
        <label>1</label>
        <note>catalytic</note>
    </ligand>
</feature>
<feature type="binding site" evidence="1">
    <location>
        <position position="104"/>
    </location>
    <ligand>
        <name>Mg(2+)</name>
        <dbReference type="ChEBI" id="CHEBI:18420"/>
        <label>2</label>
    </ligand>
</feature>
<feature type="binding site" evidence="1">
    <location>
        <position position="106"/>
    </location>
    <ligand>
        <name>Mg(2+)</name>
        <dbReference type="ChEBI" id="CHEBI:18420"/>
        <label>2</label>
    </ligand>
</feature>
<feature type="site" description="Interaction with DNA" evidence="1">
    <location>
        <position position="62"/>
    </location>
</feature>
<feature type="site" description="Interaction with DNA" evidence="1">
    <location>
        <position position="171"/>
    </location>
</feature>
<feature type="site" description="Interaction with DNA" evidence="1">
    <location>
        <position position="179"/>
    </location>
</feature>
<feature type="site" description="Interaction with DNA" evidence="1">
    <location>
        <position position="334"/>
    </location>
</feature>
<sequence length="647" mass="72711">MTRLFIAEKPSLARAIADALPKPHKKEQGCIRCANGDIVTWCIGHLLEQVEPDAYDERYKKWNMADLPIIPEQWQLRPRKSSSQQLTVVRKLLKEATQIIHAGDPDREGQLLVDEVIDYCKVPKSKKETVQRLLISDLNLSAVKRALQGLRSNREFIPLSVSALARSRADWLYGMNMSRAYTLLGKKAGYQGVLSVGRVQTPVLGLVVRRDEEIEHFIPHDYFTLDALIPYQNGTEYFDIRARWKPSEACLPWQDEEGRVTNRKLVDNVASRIANQPATVTESEQDQTKQAAPLPYSLSALQIDAAKRYNFSAQQVLDLCQSLYEKHKLITYPRSDCRYLPKEHLAQAPDVVAAIANNAQEMVTAVNDADLSLRSKAWNDSKVDAHHAIIPTPKKASVNALSGHEMKVYQLIARQYLMQFYPAAIYAEAKLVFNIAGGIFIAKGRQLLSAGWKVLTGQQDEQEECVDKVPPLPVGIVLQCREGEIKQRQTEPPRHFTEATLLQAMTGIARFVADKELKKILRETDGLGTEATRAGILDTLFKRGLLQRDNKLIKSTPAGRGLIHALPSEATYPDMTAHWEHQLQAIAEKGQAYQPFMQTLQGRLEQLIEQVQVAPVPVSLQALPAVSKPAFKRTRRAPKSKARTYKA</sequence>
<comment type="function">
    <text evidence="1">Releases the supercoiling and torsional tension of DNA, which is introduced during the DNA replication and transcription, by transiently cleaving and rejoining one strand of the DNA duplex. Introduces a single-strand break via transesterification at a target site in duplex DNA. The scissile phosphodiester is attacked by the catalytic tyrosine of the enzyme, resulting in the formation of a DNA-(5'-phosphotyrosyl)-enzyme intermediate and the expulsion of a 3'-OH DNA strand. The free DNA strand then undergoes passage around the unbroken strand, thus removing DNA supercoils. Finally, in the religation step, the DNA 3'-OH attacks the covalent intermediate to expel the active-site tyrosine and restore the DNA phosphodiester backbone.</text>
</comment>
<comment type="catalytic activity">
    <reaction evidence="1">
        <text>ATP-independent breakage of single-stranded DNA, followed by passage and rejoining.</text>
        <dbReference type="EC" id="5.6.2.1"/>
    </reaction>
</comment>
<comment type="cofactor">
    <cofactor evidence="1">
        <name>Mg(2+)</name>
        <dbReference type="ChEBI" id="CHEBI:18420"/>
    </cofactor>
    <text evidence="1">Binds two Mg(2+) per subunit.</text>
</comment>
<comment type="similarity">
    <text evidence="1 2">Belongs to the type IA topoisomerase family.</text>
</comment>
<reference key="1">
    <citation type="journal article" date="2000" name="Nature">
        <title>DNA sequence of both chromosomes of the cholera pathogen Vibrio cholerae.</title>
        <authorList>
            <person name="Heidelberg J.F."/>
            <person name="Eisen J.A."/>
            <person name="Nelson W.C."/>
            <person name="Clayton R.A."/>
            <person name="Gwinn M.L."/>
            <person name="Dodson R.J."/>
            <person name="Haft D.H."/>
            <person name="Hickey E.K."/>
            <person name="Peterson J.D."/>
            <person name="Umayam L.A."/>
            <person name="Gill S.R."/>
            <person name="Nelson K.E."/>
            <person name="Read T.D."/>
            <person name="Tettelin H."/>
            <person name="Richardson D.L."/>
            <person name="Ermolaeva M.D."/>
            <person name="Vamathevan J.J."/>
            <person name="Bass S."/>
            <person name="Qin H."/>
            <person name="Dragoi I."/>
            <person name="Sellers P."/>
            <person name="McDonald L.A."/>
            <person name="Utterback T.R."/>
            <person name="Fleischmann R.D."/>
            <person name="Nierman W.C."/>
            <person name="White O."/>
            <person name="Salzberg S.L."/>
            <person name="Smith H.O."/>
            <person name="Colwell R.R."/>
            <person name="Mekalanos J.J."/>
            <person name="Venter J.C."/>
            <person name="Fraser C.M."/>
        </authorList>
    </citation>
    <scope>NUCLEOTIDE SEQUENCE [LARGE SCALE GENOMIC DNA]</scope>
    <source>
        <strain>ATCC 39315 / El Tor Inaba N16961</strain>
    </source>
</reference>
<accession>Q9KQF5</accession>
<dbReference type="EC" id="5.6.2.1" evidence="1"/>
<dbReference type="EMBL" id="AE003852">
    <property type="protein sequence ID" value="AAF95191.1"/>
    <property type="molecule type" value="Genomic_DNA"/>
</dbReference>
<dbReference type="PIR" id="E82126">
    <property type="entry name" value="E82126"/>
</dbReference>
<dbReference type="RefSeq" id="NP_231677.1">
    <property type="nucleotide sequence ID" value="NC_002505.1"/>
</dbReference>
<dbReference type="RefSeq" id="WP_000197425.1">
    <property type="nucleotide sequence ID" value="NZ_LT906614.1"/>
</dbReference>
<dbReference type="SMR" id="Q9KQF5"/>
<dbReference type="STRING" id="243277.VC_2043"/>
<dbReference type="DNASU" id="2613424"/>
<dbReference type="EnsemblBacteria" id="AAF95191">
    <property type="protein sequence ID" value="AAF95191"/>
    <property type="gene ID" value="VC_2043"/>
</dbReference>
<dbReference type="KEGG" id="vch:VC_2043"/>
<dbReference type="PATRIC" id="fig|243277.26.peg.1951"/>
<dbReference type="eggNOG" id="COG0550">
    <property type="taxonomic scope" value="Bacteria"/>
</dbReference>
<dbReference type="HOGENOM" id="CLU_002929_5_2_6"/>
<dbReference type="Proteomes" id="UP000000584">
    <property type="component" value="Chromosome 1"/>
</dbReference>
<dbReference type="GO" id="GO:0043597">
    <property type="term" value="C:cytoplasmic replication fork"/>
    <property type="evidence" value="ECO:0000318"/>
    <property type="project" value="GO_Central"/>
</dbReference>
<dbReference type="GO" id="GO:0003677">
    <property type="term" value="F:DNA binding"/>
    <property type="evidence" value="ECO:0007669"/>
    <property type="project" value="UniProtKB-KW"/>
</dbReference>
<dbReference type="GO" id="GO:0003917">
    <property type="term" value="F:DNA topoisomerase type I (single strand cut, ATP-independent) activity"/>
    <property type="evidence" value="ECO:0000318"/>
    <property type="project" value="GO_Central"/>
</dbReference>
<dbReference type="GO" id="GO:0000287">
    <property type="term" value="F:magnesium ion binding"/>
    <property type="evidence" value="ECO:0007669"/>
    <property type="project" value="UniProtKB-UniRule"/>
</dbReference>
<dbReference type="GO" id="GO:0006310">
    <property type="term" value="P:DNA recombination"/>
    <property type="evidence" value="ECO:0000318"/>
    <property type="project" value="GO_Central"/>
</dbReference>
<dbReference type="GO" id="GO:0006281">
    <property type="term" value="P:DNA repair"/>
    <property type="evidence" value="ECO:0000318"/>
    <property type="project" value="GO_Central"/>
</dbReference>
<dbReference type="GO" id="GO:0006265">
    <property type="term" value="P:DNA topological change"/>
    <property type="evidence" value="ECO:0000318"/>
    <property type="project" value="GO_Central"/>
</dbReference>
<dbReference type="CDD" id="cd00186">
    <property type="entry name" value="TOP1Ac"/>
    <property type="match status" value="1"/>
</dbReference>
<dbReference type="CDD" id="cd03362">
    <property type="entry name" value="TOPRIM_TopoIA_TopoIII"/>
    <property type="match status" value="1"/>
</dbReference>
<dbReference type="FunFam" id="1.10.290.10:FF:000004">
    <property type="entry name" value="DNA topoisomerase 3"/>
    <property type="match status" value="1"/>
</dbReference>
<dbReference type="FunFam" id="3.40.50.140:FF:000004">
    <property type="entry name" value="DNA topoisomerase 3"/>
    <property type="match status" value="1"/>
</dbReference>
<dbReference type="Gene3D" id="3.40.50.140">
    <property type="match status" value="1"/>
</dbReference>
<dbReference type="Gene3D" id="1.10.460.10">
    <property type="entry name" value="Topoisomerase I, domain 2"/>
    <property type="match status" value="1"/>
</dbReference>
<dbReference type="Gene3D" id="2.70.20.10">
    <property type="entry name" value="Topoisomerase I, domain 3"/>
    <property type="match status" value="1"/>
</dbReference>
<dbReference type="Gene3D" id="1.10.290.10">
    <property type="entry name" value="Topoisomerase I, domain 4"/>
    <property type="match status" value="1"/>
</dbReference>
<dbReference type="HAMAP" id="MF_00953">
    <property type="entry name" value="Topoisom_3_prok"/>
    <property type="match status" value="1"/>
</dbReference>
<dbReference type="InterPro" id="IPR000380">
    <property type="entry name" value="Topo_IA"/>
</dbReference>
<dbReference type="InterPro" id="IPR003601">
    <property type="entry name" value="Topo_IA_2"/>
</dbReference>
<dbReference type="InterPro" id="IPR023406">
    <property type="entry name" value="Topo_IA_AS"/>
</dbReference>
<dbReference type="InterPro" id="IPR013497">
    <property type="entry name" value="Topo_IA_cen"/>
</dbReference>
<dbReference type="InterPro" id="IPR013824">
    <property type="entry name" value="Topo_IA_cen_sub1"/>
</dbReference>
<dbReference type="InterPro" id="IPR013825">
    <property type="entry name" value="Topo_IA_cen_sub2"/>
</dbReference>
<dbReference type="InterPro" id="IPR013826">
    <property type="entry name" value="Topo_IA_cen_sub3"/>
</dbReference>
<dbReference type="InterPro" id="IPR023405">
    <property type="entry name" value="Topo_IA_core_domain"/>
</dbReference>
<dbReference type="InterPro" id="IPR003602">
    <property type="entry name" value="Topo_IA_DNA-bd_dom"/>
</dbReference>
<dbReference type="InterPro" id="IPR005738">
    <property type="entry name" value="TopoIII"/>
</dbReference>
<dbReference type="InterPro" id="IPR006171">
    <property type="entry name" value="TOPRIM_dom"/>
</dbReference>
<dbReference type="InterPro" id="IPR034144">
    <property type="entry name" value="TOPRIM_TopoIII"/>
</dbReference>
<dbReference type="NCBIfam" id="NF005829">
    <property type="entry name" value="PRK07726.1"/>
    <property type="match status" value="1"/>
</dbReference>
<dbReference type="NCBIfam" id="TIGR01056">
    <property type="entry name" value="topB"/>
    <property type="match status" value="1"/>
</dbReference>
<dbReference type="PANTHER" id="PTHR11390:SF21">
    <property type="entry name" value="DNA TOPOISOMERASE 3-ALPHA"/>
    <property type="match status" value="1"/>
</dbReference>
<dbReference type="PANTHER" id="PTHR11390">
    <property type="entry name" value="PROKARYOTIC DNA TOPOISOMERASE"/>
    <property type="match status" value="1"/>
</dbReference>
<dbReference type="Pfam" id="PF01131">
    <property type="entry name" value="Topoisom_bac"/>
    <property type="match status" value="1"/>
</dbReference>
<dbReference type="Pfam" id="PF01751">
    <property type="entry name" value="Toprim"/>
    <property type="match status" value="1"/>
</dbReference>
<dbReference type="PRINTS" id="PR00417">
    <property type="entry name" value="PRTPISMRASEI"/>
</dbReference>
<dbReference type="SMART" id="SM00437">
    <property type="entry name" value="TOP1Ac"/>
    <property type="match status" value="1"/>
</dbReference>
<dbReference type="SMART" id="SM00436">
    <property type="entry name" value="TOP1Bc"/>
    <property type="match status" value="1"/>
</dbReference>
<dbReference type="SMART" id="SM00493">
    <property type="entry name" value="TOPRIM"/>
    <property type="match status" value="1"/>
</dbReference>
<dbReference type="SUPFAM" id="SSF56712">
    <property type="entry name" value="Prokaryotic type I DNA topoisomerase"/>
    <property type="match status" value="1"/>
</dbReference>
<dbReference type="PROSITE" id="PS00396">
    <property type="entry name" value="TOPO_IA_1"/>
    <property type="match status" value="1"/>
</dbReference>
<dbReference type="PROSITE" id="PS52039">
    <property type="entry name" value="TOPO_IA_2"/>
    <property type="match status" value="1"/>
</dbReference>
<dbReference type="PROSITE" id="PS50880">
    <property type="entry name" value="TOPRIM"/>
    <property type="match status" value="1"/>
</dbReference>